<organism>
    <name type="scientific">Ureaplasma parvum serovar 3 (strain ATCC 700970)</name>
    <dbReference type="NCBI Taxonomy" id="273119"/>
    <lineage>
        <taxon>Bacteria</taxon>
        <taxon>Bacillati</taxon>
        <taxon>Mycoplasmatota</taxon>
        <taxon>Mycoplasmoidales</taxon>
        <taxon>Mycoplasmoidaceae</taxon>
        <taxon>Ureaplasma</taxon>
    </lineage>
</organism>
<reference key="1">
    <citation type="journal article" date="2000" name="Nature">
        <title>The complete sequence of the mucosal pathogen Ureaplasma urealyticum.</title>
        <authorList>
            <person name="Glass J.I."/>
            <person name="Lefkowitz E.J."/>
            <person name="Glass J.S."/>
            <person name="Heiner C.R."/>
            <person name="Chen E.Y."/>
            <person name="Cassell G.H."/>
        </authorList>
    </citation>
    <scope>NUCLEOTIDE SEQUENCE [LARGE SCALE GENOMIC DNA]</scope>
    <source>
        <strain>ATCC 700970</strain>
    </source>
</reference>
<gene>
    <name type="ordered locus">UU147</name>
</gene>
<sequence length="57" mass="6987">MNYILNKNKKVSLTELMNQQPHWYLEELQEHLIKYLDTNGLNDTKKLIKQTIKEWKK</sequence>
<keyword id="KW-1185">Reference proteome</keyword>
<name>Y147_UREPA</name>
<protein>
    <recommendedName>
        <fullName>Uncharacterized protein UU147</fullName>
    </recommendedName>
</protein>
<dbReference type="EMBL" id="AF222894">
    <property type="protein sequence ID" value="AAF30553.1"/>
    <property type="molecule type" value="Genomic_DNA"/>
</dbReference>
<dbReference type="SMR" id="Q9PQZ7"/>
<dbReference type="STRING" id="273119.UU147"/>
<dbReference type="EnsemblBacteria" id="AAF30553">
    <property type="protein sequence ID" value="AAF30553"/>
    <property type="gene ID" value="UU147"/>
</dbReference>
<dbReference type="KEGG" id="uur:UU147"/>
<dbReference type="HOGENOM" id="CLU_2995407_0_0_14"/>
<dbReference type="Proteomes" id="UP000000423">
    <property type="component" value="Chromosome"/>
</dbReference>
<proteinExistence type="predicted"/>
<feature type="chain" id="PRO_0000220806" description="Uncharacterized protein UU147">
    <location>
        <begin position="1"/>
        <end position="57"/>
    </location>
</feature>
<accession>Q9PQZ7</accession>